<proteinExistence type="inferred from homology"/>
<evidence type="ECO:0000255" key="1">
    <source>
        <dbReference type="HAMAP-Rule" id="MF_00365"/>
    </source>
</evidence>
<keyword id="KW-0067">ATP-binding</keyword>
<keyword id="KW-0963">Cytoplasm</keyword>
<keyword id="KW-0227">DNA damage</keyword>
<keyword id="KW-0234">DNA repair</keyword>
<keyword id="KW-0235">DNA replication</keyword>
<keyword id="KW-0238">DNA-binding</keyword>
<keyword id="KW-0547">Nucleotide-binding</keyword>
<keyword id="KW-0742">SOS response</keyword>
<name>RECF_PSEAB</name>
<accession>Q02V78</accession>
<comment type="function">
    <text evidence="1">The RecF protein is involved in DNA metabolism; it is required for DNA replication and normal SOS inducibility. RecF binds preferentially to single-stranded, linear DNA. It also seems to bind ATP.</text>
</comment>
<comment type="subcellular location">
    <subcellularLocation>
        <location evidence="1">Cytoplasm</location>
    </subcellularLocation>
</comment>
<comment type="similarity">
    <text evidence="1">Belongs to the RecF family.</text>
</comment>
<gene>
    <name evidence="1" type="primary">recF</name>
    <name type="ordered locus">PA14_00030</name>
</gene>
<protein>
    <recommendedName>
        <fullName evidence="1">DNA replication and repair protein RecF</fullName>
    </recommendedName>
</protein>
<sequence length="369" mass="41459">MSLTRVSVTAVRNLHPVTLSPSPRINILYGDNGSGKTSVLEAIHLLGLARSFRSARLQPVIQYEEAACTVFGQVMLANGIASNLGISRERQGEFTIRIDGQNARSAAQLAETLPLQLINPDSFRLLEGAPKIRRQFLDWGVFHVEPRFLPVWQRLQKALRQRNSWLRHGKLDPASQAAWDRELSLASDEIDAYRRSYIQALKPVFEETLAELVSLDDLTLSYYRGWDKDRDLLEVLASSLLRDQQMGHTQAGPQRADLRIRLAGHNAAEILSRGQQKLVVCALRIAQGHLINRAKRGQCVYLVDDLPSELDEQHRMALCRLLEDLGCQVFITCVDPQLLKDGWRTDTPVSMFHVEHGKVSQTTTIGSEA</sequence>
<dbReference type="EMBL" id="CP000438">
    <property type="protein sequence ID" value="ABJ14959.1"/>
    <property type="molecule type" value="Genomic_DNA"/>
</dbReference>
<dbReference type="SMR" id="Q02V78"/>
<dbReference type="KEGG" id="pau:PA14_00030"/>
<dbReference type="PseudoCAP" id="PA14_00030"/>
<dbReference type="HOGENOM" id="CLU_040267_0_0_6"/>
<dbReference type="Proteomes" id="UP000000653">
    <property type="component" value="Chromosome"/>
</dbReference>
<dbReference type="GO" id="GO:0005737">
    <property type="term" value="C:cytoplasm"/>
    <property type="evidence" value="ECO:0007669"/>
    <property type="project" value="UniProtKB-SubCell"/>
</dbReference>
<dbReference type="GO" id="GO:0005524">
    <property type="term" value="F:ATP binding"/>
    <property type="evidence" value="ECO:0007669"/>
    <property type="project" value="UniProtKB-UniRule"/>
</dbReference>
<dbReference type="GO" id="GO:0003697">
    <property type="term" value="F:single-stranded DNA binding"/>
    <property type="evidence" value="ECO:0007669"/>
    <property type="project" value="UniProtKB-UniRule"/>
</dbReference>
<dbReference type="GO" id="GO:0006260">
    <property type="term" value="P:DNA replication"/>
    <property type="evidence" value="ECO:0007669"/>
    <property type="project" value="UniProtKB-UniRule"/>
</dbReference>
<dbReference type="GO" id="GO:0000731">
    <property type="term" value="P:DNA synthesis involved in DNA repair"/>
    <property type="evidence" value="ECO:0007669"/>
    <property type="project" value="TreeGrafter"/>
</dbReference>
<dbReference type="GO" id="GO:0006302">
    <property type="term" value="P:double-strand break repair"/>
    <property type="evidence" value="ECO:0007669"/>
    <property type="project" value="TreeGrafter"/>
</dbReference>
<dbReference type="GO" id="GO:0009432">
    <property type="term" value="P:SOS response"/>
    <property type="evidence" value="ECO:0007669"/>
    <property type="project" value="UniProtKB-UniRule"/>
</dbReference>
<dbReference type="Gene3D" id="3.40.50.300">
    <property type="entry name" value="P-loop containing nucleotide triphosphate hydrolases"/>
    <property type="match status" value="1"/>
</dbReference>
<dbReference type="Gene3D" id="1.20.1050.90">
    <property type="entry name" value="RecF/RecN/SMC, N-terminal domain"/>
    <property type="match status" value="1"/>
</dbReference>
<dbReference type="HAMAP" id="MF_00365">
    <property type="entry name" value="RecF"/>
    <property type="match status" value="1"/>
</dbReference>
<dbReference type="InterPro" id="IPR001238">
    <property type="entry name" value="DNA-binding_RecF"/>
</dbReference>
<dbReference type="InterPro" id="IPR018078">
    <property type="entry name" value="DNA-binding_RecF_CS"/>
</dbReference>
<dbReference type="InterPro" id="IPR027417">
    <property type="entry name" value="P-loop_NTPase"/>
</dbReference>
<dbReference type="InterPro" id="IPR003395">
    <property type="entry name" value="RecF/RecN/SMC_N"/>
</dbReference>
<dbReference type="InterPro" id="IPR042174">
    <property type="entry name" value="RecF_2"/>
</dbReference>
<dbReference type="NCBIfam" id="TIGR00611">
    <property type="entry name" value="recf"/>
    <property type="match status" value="1"/>
</dbReference>
<dbReference type="PANTHER" id="PTHR32182">
    <property type="entry name" value="DNA REPLICATION AND REPAIR PROTEIN RECF"/>
    <property type="match status" value="1"/>
</dbReference>
<dbReference type="PANTHER" id="PTHR32182:SF0">
    <property type="entry name" value="DNA REPLICATION AND REPAIR PROTEIN RECF"/>
    <property type="match status" value="1"/>
</dbReference>
<dbReference type="Pfam" id="PF02463">
    <property type="entry name" value="SMC_N"/>
    <property type="match status" value="1"/>
</dbReference>
<dbReference type="SUPFAM" id="SSF52540">
    <property type="entry name" value="P-loop containing nucleoside triphosphate hydrolases"/>
    <property type="match status" value="1"/>
</dbReference>
<dbReference type="PROSITE" id="PS00617">
    <property type="entry name" value="RECF_1"/>
    <property type="match status" value="1"/>
</dbReference>
<dbReference type="PROSITE" id="PS00618">
    <property type="entry name" value="RECF_2"/>
    <property type="match status" value="1"/>
</dbReference>
<reference key="1">
    <citation type="journal article" date="2006" name="Genome Biol.">
        <title>Genomic analysis reveals that Pseudomonas aeruginosa virulence is combinatorial.</title>
        <authorList>
            <person name="Lee D.G."/>
            <person name="Urbach J.M."/>
            <person name="Wu G."/>
            <person name="Liberati N.T."/>
            <person name="Feinbaum R.L."/>
            <person name="Miyata S."/>
            <person name="Diggins L.T."/>
            <person name="He J."/>
            <person name="Saucier M."/>
            <person name="Deziel E."/>
            <person name="Friedman L."/>
            <person name="Li L."/>
            <person name="Grills G."/>
            <person name="Montgomery K."/>
            <person name="Kucherlapati R."/>
            <person name="Rahme L.G."/>
            <person name="Ausubel F.M."/>
        </authorList>
    </citation>
    <scope>NUCLEOTIDE SEQUENCE [LARGE SCALE GENOMIC DNA]</scope>
    <source>
        <strain>UCBPP-PA14</strain>
    </source>
</reference>
<organism>
    <name type="scientific">Pseudomonas aeruginosa (strain UCBPP-PA14)</name>
    <dbReference type="NCBI Taxonomy" id="208963"/>
    <lineage>
        <taxon>Bacteria</taxon>
        <taxon>Pseudomonadati</taxon>
        <taxon>Pseudomonadota</taxon>
        <taxon>Gammaproteobacteria</taxon>
        <taxon>Pseudomonadales</taxon>
        <taxon>Pseudomonadaceae</taxon>
        <taxon>Pseudomonas</taxon>
    </lineage>
</organism>
<feature type="chain" id="PRO_1000048556" description="DNA replication and repair protein RecF">
    <location>
        <begin position="1"/>
        <end position="369"/>
    </location>
</feature>
<feature type="binding site" evidence="1">
    <location>
        <begin position="30"/>
        <end position="37"/>
    </location>
    <ligand>
        <name>ATP</name>
        <dbReference type="ChEBI" id="CHEBI:30616"/>
    </ligand>
</feature>